<sequence length="418" mass="46210">MHPRRPEGFDGLGYRGGVRDDPAFGGPFHARSFGSGTELGHWVTTPPDIPGSRNLHWGEKSPSYGVPSAPPTLEGPAEEPFPGGGDGPRPGRSSEQLNRFAGFGIGLASLFTENVLAHPCIVLRRQCQVNYHARHYHLTPFSVINIMYSFNKTQGPRALWKGMGSTFIVQGVTLGAEGIISEFTPLPREVSQKWNPKQIGEHLLLKCLTYMVAMPFYSASLIETVQSEIIRDNTGILECVKEGIGRVIGLGVPHSKRLLPLFSLIFPTVLHGVLHYIISSIIQKIVLLILKRKTCSSHLAESTSPMQNMLDAYFPELIANFAASLCSDVILYPLETVLHRLHIQGTRTIIDNTDLGYEVLPINTQYEGMRDCVNTIKQEEGVFGFYKGFGAVIIQYTLHATILQITKIIYSTLLQNSI</sequence>
<proteinExistence type="evidence at protein level"/>
<dbReference type="EMBL" id="AABR03109497">
    <property type="status" value="NOT_ANNOTATED_CDS"/>
    <property type="molecule type" value="Genomic_DNA"/>
</dbReference>
<dbReference type="EMBL" id="BC090000">
    <property type="protein sequence ID" value="AAH90000.1"/>
    <property type="molecule type" value="mRNA"/>
</dbReference>
<dbReference type="RefSeq" id="NP_001093985.1">
    <property type="nucleotide sequence ID" value="NM_001100515.1"/>
</dbReference>
<dbReference type="FunCoup" id="Q5EB62">
    <property type="interactions" value="2934"/>
</dbReference>
<dbReference type="STRING" id="10116.ENSRNOP00000023032"/>
<dbReference type="iPTMnet" id="Q5EB62"/>
<dbReference type="PhosphoSitePlus" id="Q5EB62"/>
<dbReference type="jPOST" id="Q5EB62"/>
<dbReference type="PaxDb" id="10116-ENSRNOP00000023032"/>
<dbReference type="Ensembl" id="ENSRNOT00000023032.7">
    <property type="protein sequence ID" value="ENSRNOP00000023032.5"/>
    <property type="gene ID" value="ENSRNOG00000017091.8"/>
</dbReference>
<dbReference type="GeneID" id="291709"/>
<dbReference type="KEGG" id="rno:291709"/>
<dbReference type="UCSC" id="RGD:1305072">
    <property type="organism name" value="rat"/>
</dbReference>
<dbReference type="AGR" id="RGD:1305072"/>
<dbReference type="CTD" id="91137"/>
<dbReference type="RGD" id="1305072">
    <property type="gene designation" value="Slc25a46"/>
</dbReference>
<dbReference type="eggNOG" id="KOG2954">
    <property type="taxonomic scope" value="Eukaryota"/>
</dbReference>
<dbReference type="GeneTree" id="ENSGT00390000015874"/>
<dbReference type="HOGENOM" id="CLU_047010_0_0_1"/>
<dbReference type="InParanoid" id="Q5EB62"/>
<dbReference type="OMA" id="RQCQVNH"/>
<dbReference type="OrthoDB" id="2403262at2759"/>
<dbReference type="PhylomeDB" id="Q5EB62"/>
<dbReference type="TreeFam" id="TF313365"/>
<dbReference type="PRO" id="PR:Q5EB62"/>
<dbReference type="Proteomes" id="UP000002494">
    <property type="component" value="Chromosome 18"/>
</dbReference>
<dbReference type="Bgee" id="ENSRNOG00000017091">
    <property type="expression patterns" value="Expressed in quadriceps femoris and 19 other cell types or tissues"/>
</dbReference>
<dbReference type="ExpressionAtlas" id="Q5EB62">
    <property type="expression patterns" value="baseline and differential"/>
</dbReference>
<dbReference type="GO" id="GO:0005741">
    <property type="term" value="C:mitochondrial outer membrane"/>
    <property type="evidence" value="ECO:0000250"/>
    <property type="project" value="UniProtKB"/>
</dbReference>
<dbReference type="GO" id="GO:0005739">
    <property type="term" value="C:mitochondrion"/>
    <property type="evidence" value="ECO:0000266"/>
    <property type="project" value="RGD"/>
</dbReference>
<dbReference type="GO" id="GO:0044877">
    <property type="term" value="F:protein-containing complex binding"/>
    <property type="evidence" value="ECO:0000266"/>
    <property type="project" value="RGD"/>
</dbReference>
<dbReference type="GO" id="GO:0000422">
    <property type="term" value="P:autophagy of mitochondrion"/>
    <property type="evidence" value="ECO:0000266"/>
    <property type="project" value="RGD"/>
</dbReference>
<dbReference type="GO" id="GO:0061564">
    <property type="term" value="P:axon development"/>
    <property type="evidence" value="ECO:0000318"/>
    <property type="project" value="GO_Central"/>
</dbReference>
<dbReference type="GO" id="GO:0021702">
    <property type="term" value="P:cerebellar Purkinje cell differentiation"/>
    <property type="evidence" value="ECO:0000266"/>
    <property type="project" value="RGD"/>
</dbReference>
<dbReference type="GO" id="GO:0042407">
    <property type="term" value="P:cristae formation"/>
    <property type="evidence" value="ECO:0000266"/>
    <property type="project" value="RGD"/>
</dbReference>
<dbReference type="GO" id="GO:0016358">
    <property type="term" value="P:dendrite development"/>
    <property type="evidence" value="ECO:0000266"/>
    <property type="project" value="RGD"/>
</dbReference>
<dbReference type="GO" id="GO:0051649">
    <property type="term" value="P:establishment of localization in cell"/>
    <property type="evidence" value="ECO:0000266"/>
    <property type="project" value="RGD"/>
</dbReference>
<dbReference type="GO" id="GO:0031987">
    <property type="term" value="P:locomotion involved in locomotory behavior"/>
    <property type="evidence" value="ECO:0000266"/>
    <property type="project" value="RGD"/>
</dbReference>
<dbReference type="GO" id="GO:0000266">
    <property type="term" value="P:mitochondrial fission"/>
    <property type="evidence" value="ECO:0000250"/>
    <property type="project" value="UniProtKB"/>
</dbReference>
<dbReference type="GO" id="GO:0090149">
    <property type="term" value="P:mitochondrial membrane fission"/>
    <property type="evidence" value="ECO:0007669"/>
    <property type="project" value="InterPro"/>
</dbReference>
<dbReference type="GO" id="GO:0006839">
    <property type="term" value="P:mitochondrial transport"/>
    <property type="evidence" value="ECO:0000266"/>
    <property type="project" value="RGD"/>
</dbReference>
<dbReference type="GO" id="GO:0007005">
    <property type="term" value="P:mitochondrion organization"/>
    <property type="evidence" value="ECO:0000266"/>
    <property type="project" value="RGD"/>
</dbReference>
<dbReference type="GO" id="GO:0022011">
    <property type="term" value="P:myelination in peripheral nervous system"/>
    <property type="evidence" value="ECO:0000266"/>
    <property type="project" value="RGD"/>
</dbReference>
<dbReference type="GO" id="GO:0021554">
    <property type="term" value="P:optic nerve development"/>
    <property type="evidence" value="ECO:0000266"/>
    <property type="project" value="RGD"/>
</dbReference>
<dbReference type="GO" id="GO:0048936">
    <property type="term" value="P:peripheral nervous system neuron axonogenesis"/>
    <property type="evidence" value="ECO:0000266"/>
    <property type="project" value="RGD"/>
</dbReference>
<dbReference type="GO" id="GO:0055091">
    <property type="term" value="P:phospholipid homeostasis"/>
    <property type="evidence" value="ECO:0000266"/>
    <property type="project" value="RGD"/>
</dbReference>
<dbReference type="GO" id="GO:0065003">
    <property type="term" value="P:protein-containing complex assembly"/>
    <property type="evidence" value="ECO:0000266"/>
    <property type="project" value="RGD"/>
</dbReference>
<dbReference type="GO" id="GO:0008535">
    <property type="term" value="P:respiratory chain complex IV assembly"/>
    <property type="evidence" value="ECO:0000266"/>
    <property type="project" value="RGD"/>
</dbReference>
<dbReference type="GO" id="GO:0007416">
    <property type="term" value="P:synapse assembly"/>
    <property type="evidence" value="ECO:0000266"/>
    <property type="project" value="RGD"/>
</dbReference>
<dbReference type="FunFam" id="1.50.40.10:FF:000057">
    <property type="entry name" value="Solute carrier family 25 member 46"/>
    <property type="match status" value="1"/>
</dbReference>
<dbReference type="Gene3D" id="1.50.40.10">
    <property type="entry name" value="Mitochondrial carrier domain"/>
    <property type="match status" value="1"/>
</dbReference>
<dbReference type="InterPro" id="IPR018108">
    <property type="entry name" value="Mitochondrial_sb/sol_carrier"/>
</dbReference>
<dbReference type="InterPro" id="IPR023395">
    <property type="entry name" value="Mt_carrier_dom_sf"/>
</dbReference>
<dbReference type="InterPro" id="IPR039158">
    <property type="entry name" value="SLC25A46"/>
</dbReference>
<dbReference type="PANTHER" id="PTHR21252:SF2">
    <property type="entry name" value="MITOCHONDRIAL OUTER MEMBRANE PROTEIN SLC25A46"/>
    <property type="match status" value="1"/>
</dbReference>
<dbReference type="PANTHER" id="PTHR21252">
    <property type="entry name" value="TB1 PROTEIN-RELATED"/>
    <property type="match status" value="1"/>
</dbReference>
<dbReference type="Pfam" id="PF00153">
    <property type="entry name" value="Mito_carr"/>
    <property type="match status" value="2"/>
</dbReference>
<dbReference type="SUPFAM" id="SSF103506">
    <property type="entry name" value="Mitochondrial carrier"/>
    <property type="match status" value="1"/>
</dbReference>
<dbReference type="PROSITE" id="PS50920">
    <property type="entry name" value="SOLCAR"/>
    <property type="match status" value="2"/>
</dbReference>
<evidence type="ECO:0000250" key="1">
    <source>
        <dbReference type="UniProtKB" id="Q96AG3"/>
    </source>
</evidence>
<evidence type="ECO:0000255" key="2"/>
<evidence type="ECO:0000256" key="3">
    <source>
        <dbReference type="SAM" id="MobiDB-lite"/>
    </source>
</evidence>
<evidence type="ECO:0000269" key="4">
    <source>
    </source>
</evidence>
<evidence type="ECO:0000305" key="5"/>
<evidence type="ECO:0000312" key="6">
    <source>
        <dbReference type="RGD" id="1305072"/>
    </source>
</evidence>
<evidence type="ECO:0007744" key="7">
    <source>
    </source>
</evidence>
<feature type="chain" id="PRO_0000291830" description="Mitochondrial outer membrane protein SLC25A46">
    <location>
        <begin position="1"/>
        <end position="418"/>
    </location>
</feature>
<feature type="transmembrane region" description="Helical; Name=1" evidence="2">
    <location>
        <begin position="103"/>
        <end position="123"/>
    </location>
</feature>
<feature type="transmembrane region" description="Helical; Name=2" evidence="2">
    <location>
        <begin position="167"/>
        <end position="187"/>
    </location>
</feature>
<feature type="transmembrane region" description="Helical; Name=3" evidence="2">
    <location>
        <begin position="202"/>
        <end position="222"/>
    </location>
</feature>
<feature type="transmembrane region" description="Helical; Name=4" evidence="2">
    <location>
        <begin position="258"/>
        <end position="278"/>
    </location>
</feature>
<feature type="transmembrane region" description="Helical; Name=5" evidence="2">
    <location>
        <begin position="314"/>
        <end position="334"/>
    </location>
</feature>
<feature type="transmembrane region" description="Helical; Name=6" evidence="2">
    <location>
        <begin position="382"/>
        <end position="402"/>
    </location>
</feature>
<feature type="repeat" description="Solcar 1">
    <location>
        <begin position="96"/>
        <end position="187"/>
    </location>
</feature>
<feature type="repeat" description="Solcar 2">
    <location>
        <begin position="311"/>
        <end position="416"/>
    </location>
</feature>
<feature type="region of interest" description="Disordered" evidence="3">
    <location>
        <begin position="46"/>
        <end position="96"/>
    </location>
</feature>
<feature type="modified residue" description="Phosphoserine" evidence="7">
    <location>
        <position position="32"/>
    </location>
</feature>
<feature type="modified residue" description="Phosphoserine" evidence="7">
    <location>
        <position position="35"/>
    </location>
</feature>
<feature type="modified residue" description="Phosphothreonine" evidence="7">
    <location>
        <position position="45"/>
    </location>
</feature>
<accession>Q5EB62</accession>
<organism>
    <name type="scientific">Rattus norvegicus</name>
    <name type="common">Rat</name>
    <dbReference type="NCBI Taxonomy" id="10116"/>
    <lineage>
        <taxon>Eukaryota</taxon>
        <taxon>Metazoa</taxon>
        <taxon>Chordata</taxon>
        <taxon>Craniata</taxon>
        <taxon>Vertebrata</taxon>
        <taxon>Euteleostomi</taxon>
        <taxon>Mammalia</taxon>
        <taxon>Eutheria</taxon>
        <taxon>Euarchontoglires</taxon>
        <taxon>Glires</taxon>
        <taxon>Rodentia</taxon>
        <taxon>Myomorpha</taxon>
        <taxon>Muroidea</taxon>
        <taxon>Muridae</taxon>
        <taxon>Murinae</taxon>
        <taxon>Rattus</taxon>
    </lineage>
</organism>
<gene>
    <name evidence="6" type="primary">Slc25a46</name>
</gene>
<reference key="1">
    <citation type="journal article" date="2004" name="Nature">
        <title>Genome sequence of the Brown Norway rat yields insights into mammalian evolution.</title>
        <authorList>
            <person name="Gibbs R.A."/>
            <person name="Weinstock G.M."/>
            <person name="Metzker M.L."/>
            <person name="Muzny D.M."/>
            <person name="Sodergren E.J."/>
            <person name="Scherer S."/>
            <person name="Scott G."/>
            <person name="Steffen D."/>
            <person name="Worley K.C."/>
            <person name="Burch P.E."/>
            <person name="Okwuonu G."/>
            <person name="Hines S."/>
            <person name="Lewis L."/>
            <person name="Deramo C."/>
            <person name="Delgado O."/>
            <person name="Dugan-Rocha S."/>
            <person name="Miner G."/>
            <person name="Morgan M."/>
            <person name="Hawes A."/>
            <person name="Gill R."/>
            <person name="Holt R.A."/>
            <person name="Adams M.D."/>
            <person name="Amanatides P.G."/>
            <person name="Baden-Tillson H."/>
            <person name="Barnstead M."/>
            <person name="Chin S."/>
            <person name="Evans C.A."/>
            <person name="Ferriera S."/>
            <person name="Fosler C."/>
            <person name="Glodek A."/>
            <person name="Gu Z."/>
            <person name="Jennings D."/>
            <person name="Kraft C.L."/>
            <person name="Nguyen T."/>
            <person name="Pfannkoch C.M."/>
            <person name="Sitter C."/>
            <person name="Sutton G.G."/>
            <person name="Venter J.C."/>
            <person name="Woodage T."/>
            <person name="Smith D."/>
            <person name="Lee H.-M."/>
            <person name="Gustafson E."/>
            <person name="Cahill P."/>
            <person name="Kana A."/>
            <person name="Doucette-Stamm L."/>
            <person name="Weinstock K."/>
            <person name="Fechtel K."/>
            <person name="Weiss R.B."/>
            <person name="Dunn D.M."/>
            <person name="Green E.D."/>
            <person name="Blakesley R.W."/>
            <person name="Bouffard G.G."/>
            <person name="De Jong P.J."/>
            <person name="Osoegawa K."/>
            <person name="Zhu B."/>
            <person name="Marra M."/>
            <person name="Schein J."/>
            <person name="Bosdet I."/>
            <person name="Fjell C."/>
            <person name="Jones S."/>
            <person name="Krzywinski M."/>
            <person name="Mathewson C."/>
            <person name="Siddiqui A."/>
            <person name="Wye N."/>
            <person name="McPherson J."/>
            <person name="Zhao S."/>
            <person name="Fraser C.M."/>
            <person name="Shetty J."/>
            <person name="Shatsman S."/>
            <person name="Geer K."/>
            <person name="Chen Y."/>
            <person name="Abramzon S."/>
            <person name="Nierman W.C."/>
            <person name="Havlak P.H."/>
            <person name="Chen R."/>
            <person name="Durbin K.J."/>
            <person name="Egan A."/>
            <person name="Ren Y."/>
            <person name="Song X.-Z."/>
            <person name="Li B."/>
            <person name="Liu Y."/>
            <person name="Qin X."/>
            <person name="Cawley S."/>
            <person name="Cooney A.J."/>
            <person name="D'Souza L.M."/>
            <person name="Martin K."/>
            <person name="Wu J.Q."/>
            <person name="Gonzalez-Garay M.L."/>
            <person name="Jackson A.R."/>
            <person name="Kalafus K.J."/>
            <person name="McLeod M.P."/>
            <person name="Milosavljevic A."/>
            <person name="Virk D."/>
            <person name="Volkov A."/>
            <person name="Wheeler D.A."/>
            <person name="Zhang Z."/>
            <person name="Bailey J.A."/>
            <person name="Eichler E.E."/>
            <person name="Tuzun E."/>
            <person name="Birney E."/>
            <person name="Mongin E."/>
            <person name="Ureta-Vidal A."/>
            <person name="Woodwark C."/>
            <person name="Zdobnov E."/>
            <person name="Bork P."/>
            <person name="Suyama M."/>
            <person name="Torrents D."/>
            <person name="Alexandersson M."/>
            <person name="Trask B.J."/>
            <person name="Young J.M."/>
            <person name="Huang H."/>
            <person name="Wang H."/>
            <person name="Xing H."/>
            <person name="Daniels S."/>
            <person name="Gietzen D."/>
            <person name="Schmidt J."/>
            <person name="Stevens K."/>
            <person name="Vitt U."/>
            <person name="Wingrove J."/>
            <person name="Camara F."/>
            <person name="Mar Alba M."/>
            <person name="Abril J.F."/>
            <person name="Guigo R."/>
            <person name="Smit A."/>
            <person name="Dubchak I."/>
            <person name="Rubin E.M."/>
            <person name="Couronne O."/>
            <person name="Poliakov A."/>
            <person name="Huebner N."/>
            <person name="Ganten D."/>
            <person name="Goesele C."/>
            <person name="Hummel O."/>
            <person name="Kreitler T."/>
            <person name="Lee Y.-A."/>
            <person name="Monti J."/>
            <person name="Schulz H."/>
            <person name="Zimdahl H."/>
            <person name="Himmelbauer H."/>
            <person name="Lehrach H."/>
            <person name="Jacob H.J."/>
            <person name="Bromberg S."/>
            <person name="Gullings-Handley J."/>
            <person name="Jensen-Seaman M.I."/>
            <person name="Kwitek A.E."/>
            <person name="Lazar J."/>
            <person name="Pasko D."/>
            <person name="Tonellato P.J."/>
            <person name="Twigger S."/>
            <person name="Ponting C.P."/>
            <person name="Duarte J.M."/>
            <person name="Rice S."/>
            <person name="Goodstadt L."/>
            <person name="Beatson S.A."/>
            <person name="Emes R.D."/>
            <person name="Winter E.E."/>
            <person name="Webber C."/>
            <person name="Brandt P."/>
            <person name="Nyakatura G."/>
            <person name="Adetobi M."/>
            <person name="Chiaromonte F."/>
            <person name="Elnitski L."/>
            <person name="Eswara P."/>
            <person name="Hardison R.C."/>
            <person name="Hou M."/>
            <person name="Kolbe D."/>
            <person name="Makova K."/>
            <person name="Miller W."/>
            <person name="Nekrutenko A."/>
            <person name="Riemer C."/>
            <person name="Schwartz S."/>
            <person name="Taylor J."/>
            <person name="Yang S."/>
            <person name="Zhang Y."/>
            <person name="Lindpaintner K."/>
            <person name="Andrews T.D."/>
            <person name="Caccamo M."/>
            <person name="Clamp M."/>
            <person name="Clarke L."/>
            <person name="Curwen V."/>
            <person name="Durbin R.M."/>
            <person name="Eyras E."/>
            <person name="Searle S.M."/>
            <person name="Cooper G.M."/>
            <person name="Batzoglou S."/>
            <person name="Brudno M."/>
            <person name="Sidow A."/>
            <person name="Stone E.A."/>
            <person name="Payseur B.A."/>
            <person name="Bourque G."/>
            <person name="Lopez-Otin C."/>
            <person name="Puente X.S."/>
            <person name="Chakrabarti K."/>
            <person name="Chatterji S."/>
            <person name="Dewey C."/>
            <person name="Pachter L."/>
            <person name="Bray N."/>
            <person name="Yap V.B."/>
            <person name="Caspi A."/>
            <person name="Tesler G."/>
            <person name="Pevzner P.A."/>
            <person name="Haussler D."/>
            <person name="Roskin K.M."/>
            <person name="Baertsch R."/>
            <person name="Clawson H."/>
            <person name="Furey T.S."/>
            <person name="Hinrichs A.S."/>
            <person name="Karolchik D."/>
            <person name="Kent W.J."/>
            <person name="Rosenbloom K.R."/>
            <person name="Trumbower H."/>
            <person name="Weirauch M."/>
            <person name="Cooper D.N."/>
            <person name="Stenson P.D."/>
            <person name="Ma B."/>
            <person name="Brent M."/>
            <person name="Arumugam M."/>
            <person name="Shteynberg D."/>
            <person name="Copley R.R."/>
            <person name="Taylor M.S."/>
            <person name="Riethman H."/>
            <person name="Mudunuri U."/>
            <person name="Peterson J."/>
            <person name="Guyer M."/>
            <person name="Felsenfeld A."/>
            <person name="Old S."/>
            <person name="Mockrin S."/>
            <person name="Collins F.S."/>
        </authorList>
    </citation>
    <scope>NUCLEOTIDE SEQUENCE [LARGE SCALE GENOMIC DNA]</scope>
    <source>
        <strain>Brown Norway</strain>
    </source>
</reference>
<reference key="2">
    <citation type="journal article" date="2004" name="Genome Res.">
        <title>The status, quality, and expansion of the NIH full-length cDNA project: the Mammalian Gene Collection (MGC).</title>
        <authorList>
            <consortium name="The MGC Project Team"/>
        </authorList>
    </citation>
    <scope>NUCLEOTIDE SEQUENCE [LARGE SCALE MRNA] OF 165-418</scope>
    <source>
        <tissue>Liver</tissue>
    </source>
</reference>
<reference key="3">
    <citation type="journal article" date="2006" name="Genomics">
        <title>Fourteen novel human members of mitochondrial solute carrier family 25 (SLC25) widely expressed in the central nervous system.</title>
        <authorList>
            <person name="Haitina T."/>
            <person name="Lindblom J."/>
            <person name="Renstroem T."/>
            <person name="Fredriksson R."/>
        </authorList>
    </citation>
    <scope>TISSUE SPECIFICITY</scope>
</reference>
<reference key="4">
    <citation type="journal article" date="2012" name="Nat. Commun.">
        <title>Quantitative maps of protein phosphorylation sites across 14 different rat organs and tissues.</title>
        <authorList>
            <person name="Lundby A."/>
            <person name="Secher A."/>
            <person name="Lage K."/>
            <person name="Nordsborg N.B."/>
            <person name="Dmytriyev A."/>
            <person name="Lundby C."/>
            <person name="Olsen J.V."/>
        </authorList>
    </citation>
    <scope>PHOSPHORYLATION [LARGE SCALE ANALYSIS] AT SER-32; SER-35 AND THR-45</scope>
    <scope>IDENTIFICATION BY MASS SPECTROMETRY [LARGE SCALE ANALYSIS]</scope>
</reference>
<protein>
    <recommendedName>
        <fullName evidence="1">Mitochondrial outer membrane protein SLC25A46</fullName>
    </recommendedName>
    <alternativeName>
        <fullName evidence="6">Solute carrier family 25 member 46</fullName>
    </alternativeName>
</protein>
<comment type="function">
    <text evidence="1">Transmembrane protein of the mitochondrial outer membrane that controls mitochondrial organization. May regulate the assembly of the MICOS (mitochondrial contact site and cristae organizing system) complex which is essential to the biogenesis and dynamics of mitochondrial cristae, the inwards folds of the inner mitochondrial membrane. Through its interaction with the EMC (endoplasmic reticulum membrane protein complex), could regulate mitochondrial lipid homeostasis and thereby mitochondrial fission.</text>
</comment>
<comment type="subunit">
    <text evidence="1">Associates with the mitochondrial contact site and cristae organizing system (MICOS) complex. May associate with the endoplasmic reticulum membrane protein complex (EMC).</text>
</comment>
<comment type="subcellular location">
    <subcellularLocation>
        <location evidence="1">Mitochondrion outer membrane</location>
        <topology evidence="2">Multi-pass membrane protein</topology>
    </subcellularLocation>
</comment>
<comment type="tissue specificity">
    <text evidence="4">Widely expressed. Highly expressed in hindbrain, spinal cord and brain coronal sections containing corpus callosum, fornix, optic chiasm, thalamus, hypothalamus, midbrain, pons and cerebellum.</text>
</comment>
<comment type="similarity">
    <text evidence="5">Belongs to the mitochondrial carrier (TC 2.A.29) family.</text>
</comment>
<name>S2546_RAT</name>
<keyword id="KW-0472">Membrane</keyword>
<keyword id="KW-0496">Mitochondrion</keyword>
<keyword id="KW-1000">Mitochondrion outer membrane</keyword>
<keyword id="KW-0597">Phosphoprotein</keyword>
<keyword id="KW-1185">Reference proteome</keyword>
<keyword id="KW-0677">Repeat</keyword>
<keyword id="KW-0812">Transmembrane</keyword>
<keyword id="KW-1133">Transmembrane helix</keyword>
<keyword id="KW-0813">Transport</keyword>